<sequence length="526" mass="60677">MRNLIFEEPEGIPGNSSSSLRYAWQSIRAPVIIPLLKLAVIVCSVMSIMLFVERVAMAAVILIVKVLRKKRYTKYNLEAMKQKLERSKKYPMVLIQIPMYNEKEVYKLSIGAVCGLSWPADRFIVQVLDDSTNPVLRELVEMECQKWIQKGVNVKYENRRNRNGYKAGALKEGLEKQYVEDCEFVAIFDADFQPDADFLWNTIPYLLENPKLGLVQARWKFVNSEECMMTRLQEMSLDYHFSVEQEVGSSTYSFFGFNGTAGVWRIQAIKDAGGWKDRTTVEDMDLAVRASLHGWEFVFVGDVKVKNELPSTFKAYRFQQHRWSCGPANLFKKMTKEIICCKRVPLLKRLHLIYAFFFVRKIVAHWVTFFFYCIVIPACVIVPEVNLKKQIAIYIPATITILNAVSTPRSMHLLVLWILFENVMSLHRTKAAIIGLLEANRVNEWVVTEKLGNAMKQRNNARPSRASRFRIIERIHPLEIIVGMYMLHCATYDLLFGHDHFFVYLLLQAGAFFTMGFGLVGTIVPT</sequence>
<proteinExistence type="evidence at protein level"/>
<accession>Q6UDF0</accession>
<reference key="1">
    <citation type="journal article" date="2004" name="Science">
        <title>Guar seed beta-mannan synthase is a member of the cellulose synthase super gene family.</title>
        <authorList>
            <person name="Dhugga K.S."/>
            <person name="Barreiro R."/>
            <person name="Whitten B."/>
            <person name="Stecca K."/>
            <person name="Hazebroek J."/>
            <person name="Randhawa G.S."/>
            <person name="Dolan M."/>
            <person name="Kinney A.J."/>
            <person name="Tomes D."/>
            <person name="Nichols S."/>
            <person name="Anderson P."/>
        </authorList>
    </citation>
    <scope>NUCLEOTIDE SEQUENCE [MRNA]</scope>
    <scope>FUNCTION</scope>
    <scope>CATALYTIC ACTIVITY</scope>
    <scope>SUBCELLULAR LOCATION</scope>
    <scope>DEVELOPMENTAL STAGE</scope>
</reference>
<name>CSLA1_CYATE</name>
<protein>
    <recommendedName>
        <fullName evidence="4">Glucomannan 4-beta-mannosyltransferase 1</fullName>
        <ecNumber evidence="2">2.4.1.32</ecNumber>
    </recommendedName>
    <alternativeName>
        <fullName evidence="3">CtManS</fullName>
    </alternativeName>
    <alternativeName>
        <fullName evidence="4">Glucomannan synthase</fullName>
    </alternativeName>
    <alternativeName>
        <fullName evidence="4">Mannan synthase 1</fullName>
    </alternativeName>
</protein>
<gene>
    <name evidence="3" type="primary">ManS</name>
</gene>
<comment type="function">
    <text evidence="2">Possesses 4-beta-mannosyltransferase activity on mannan using GDP-mannose. The beta-1,4-mannan product is the backbone for galactomannan synthesis by galactomannan galactosyltransferase. The galactomannan is a hemicellulosic storage polysaccharide accumulated in the form of secondary wall thickenings in the seed endosperm.</text>
</comment>
<comment type="catalytic activity">
    <reaction evidence="2">
        <text>GDP-mannose + (glucomannan)n = GDP + (glucomannan)n+1.</text>
        <dbReference type="EC" id="2.4.1.32"/>
    </reaction>
</comment>
<comment type="subcellular location">
    <subcellularLocation>
        <location evidence="2">Golgi apparatus membrane</location>
        <topology evidence="2">Multi-pass membrane protein</topology>
    </subcellularLocation>
</comment>
<comment type="developmental stage">
    <text evidence="2">Expressed exclusively in the endosperm of developing seeds, 25 to 30 days after flowering. Not expressed in the embryo or seed coat.</text>
</comment>
<comment type="biotechnology">
    <text>Guar gum also called guaran is a galactomannan extracted from guar seed endosperm. Gums are most commonly used as food additives to provide stiffness and texture, prevent ice crystal formation, maintain crispiness, and retain moisture. They have many other non-food applications such as dying and printing aids in the textile industry, thickeners for shampoos and conditioners, binders and hardeners for paper, rheological facilitators for concrete, and drilling agents for oil and gas wells.</text>
</comment>
<comment type="miscellaneous">
    <text>Galactomannan is accumulated only in the endosperm and constitutes more than 90% of this tissue at maturity. Galactomannan is made by the combined actions of two enzymes: mannan synthase (ManS), which makes beta-1,4-linked mannan backbone, and alpha-galactosyltransferase, which adds galactosyl residues to the mannan backbone. The mannose/galactose ratio of guar galactomannan is 2. The degree of galactosyl substitution on the mannan backbone determines the quality of galactomannan as a gum. A mannose/galactose ratio of 4 provides a gum of higher quality than a ratio of 2.</text>
</comment>
<comment type="similarity">
    <text evidence="4">Belongs to the glycosyltransferase 2 family. Plant cellulose synthase-like A subfamily.</text>
</comment>
<evidence type="ECO:0000255" key="1"/>
<evidence type="ECO:0000269" key="2">
    <source>
    </source>
</evidence>
<evidence type="ECO:0000303" key="3">
    <source>
    </source>
</evidence>
<evidence type="ECO:0000305" key="4"/>
<keyword id="KW-0961">Cell wall biogenesis/degradation</keyword>
<keyword id="KW-0328">Glycosyltransferase</keyword>
<keyword id="KW-0333">Golgi apparatus</keyword>
<keyword id="KW-0472">Membrane</keyword>
<keyword id="KW-0808">Transferase</keyword>
<keyword id="KW-0812">Transmembrane</keyword>
<keyword id="KW-1133">Transmembrane helix</keyword>
<feature type="chain" id="PRO_0000319381" description="Glucomannan 4-beta-mannosyltransferase 1">
    <location>
        <begin position="1"/>
        <end position="526"/>
    </location>
</feature>
<feature type="transmembrane region" description="Helical" evidence="1">
    <location>
        <begin position="31"/>
        <end position="51"/>
    </location>
</feature>
<feature type="transmembrane region" description="Helical" evidence="1">
    <location>
        <begin position="362"/>
        <end position="382"/>
    </location>
</feature>
<feature type="transmembrane region" description="Helical" evidence="1">
    <location>
        <begin position="399"/>
        <end position="419"/>
    </location>
</feature>
<feature type="transmembrane region" description="Helical" evidence="1">
    <location>
        <begin position="477"/>
        <end position="497"/>
    </location>
</feature>
<feature type="transmembrane region" description="Helical" evidence="1">
    <location>
        <begin position="501"/>
        <end position="521"/>
    </location>
</feature>
<feature type="active site" evidence="1">
    <location>
        <position position="130"/>
    </location>
</feature>
<feature type="active site" evidence="1">
    <location>
        <position position="283"/>
    </location>
</feature>
<feature type="binding site" evidence="1">
    <location>
        <position position="189"/>
    </location>
    <ligand>
        <name>substrate</name>
    </ligand>
</feature>
<feature type="binding site" evidence="1">
    <location>
        <position position="191"/>
    </location>
    <ligand>
        <name>substrate</name>
    </ligand>
</feature>
<organism>
    <name type="scientific">Cyamopsis tetragonoloba</name>
    <name type="common">Guar</name>
    <name type="synonym">Cluster bean</name>
    <dbReference type="NCBI Taxonomy" id="3832"/>
    <lineage>
        <taxon>Eukaryota</taxon>
        <taxon>Viridiplantae</taxon>
        <taxon>Streptophyta</taxon>
        <taxon>Embryophyta</taxon>
        <taxon>Tracheophyta</taxon>
        <taxon>Spermatophyta</taxon>
        <taxon>Magnoliopsida</taxon>
        <taxon>eudicotyledons</taxon>
        <taxon>Gunneridae</taxon>
        <taxon>Pentapetalae</taxon>
        <taxon>rosids</taxon>
        <taxon>fabids</taxon>
        <taxon>Fabales</taxon>
        <taxon>Fabaceae</taxon>
        <taxon>Papilionoideae</taxon>
        <taxon>50 kb inversion clade</taxon>
        <taxon>NPAAA clade</taxon>
        <taxon>indigoferoid/millettioid clade</taxon>
        <taxon>Indigofereae</taxon>
        <taxon>Cyamopsis</taxon>
    </lineage>
</organism>
<dbReference type="EC" id="2.4.1.32" evidence="2"/>
<dbReference type="EMBL" id="AY372247">
    <property type="protein sequence ID" value="AAR23313.1"/>
    <property type="molecule type" value="mRNA"/>
</dbReference>
<dbReference type="SMR" id="Q6UDF0"/>
<dbReference type="CAZy" id="GT2">
    <property type="family name" value="Glycosyltransferase Family 2"/>
</dbReference>
<dbReference type="GO" id="GO:0000139">
    <property type="term" value="C:Golgi membrane"/>
    <property type="evidence" value="ECO:0007669"/>
    <property type="project" value="UniProtKB-SubCell"/>
</dbReference>
<dbReference type="GO" id="GO:0047259">
    <property type="term" value="F:glucomannan 4-beta-mannosyltransferase activity"/>
    <property type="evidence" value="ECO:0007669"/>
    <property type="project" value="UniProtKB-EC"/>
</dbReference>
<dbReference type="GO" id="GO:0051753">
    <property type="term" value="F:mannan synthase activity"/>
    <property type="evidence" value="ECO:0007669"/>
    <property type="project" value="TreeGrafter"/>
</dbReference>
<dbReference type="GO" id="GO:0071555">
    <property type="term" value="P:cell wall organization"/>
    <property type="evidence" value="ECO:0007669"/>
    <property type="project" value="UniProtKB-KW"/>
</dbReference>
<dbReference type="CDD" id="cd06437">
    <property type="entry name" value="CESA_CaSu_A2"/>
    <property type="match status" value="1"/>
</dbReference>
<dbReference type="FunFam" id="3.90.550.10:FF:000015">
    <property type="entry name" value="Glucomannan 4-beta-mannosyltransferase 9"/>
    <property type="match status" value="1"/>
</dbReference>
<dbReference type="Gene3D" id="3.90.550.10">
    <property type="entry name" value="Spore Coat Polysaccharide Biosynthesis Protein SpsA, Chain A"/>
    <property type="match status" value="1"/>
</dbReference>
<dbReference type="InterPro" id="IPR001173">
    <property type="entry name" value="Glyco_trans_2-like"/>
</dbReference>
<dbReference type="InterPro" id="IPR029044">
    <property type="entry name" value="Nucleotide-diphossugar_trans"/>
</dbReference>
<dbReference type="PANTHER" id="PTHR32044">
    <property type="entry name" value="GLUCOMANNAN 4-BETA-MANNOSYLTRANSFERASE 9"/>
    <property type="match status" value="1"/>
</dbReference>
<dbReference type="PANTHER" id="PTHR32044:SF64">
    <property type="entry name" value="OS09G0572500 PROTEIN"/>
    <property type="match status" value="1"/>
</dbReference>
<dbReference type="Pfam" id="PF13632">
    <property type="entry name" value="Glyco_trans_2_3"/>
    <property type="match status" value="1"/>
</dbReference>
<dbReference type="SUPFAM" id="SSF53448">
    <property type="entry name" value="Nucleotide-diphospho-sugar transferases"/>
    <property type="match status" value="1"/>
</dbReference>